<comment type="function">
    <text evidence="1">Removes the formyl group from the N-terminal Met of newly synthesized proteins. Requires at least a dipeptide for an efficient rate of reaction. N-terminal L-methionine is a prerequisite for activity but the enzyme has broad specificity at other positions.</text>
</comment>
<comment type="catalytic activity">
    <reaction evidence="1">
        <text>N-terminal N-formyl-L-methionyl-[peptide] + H2O = N-terminal L-methionyl-[peptide] + formate</text>
        <dbReference type="Rhea" id="RHEA:24420"/>
        <dbReference type="Rhea" id="RHEA-COMP:10639"/>
        <dbReference type="Rhea" id="RHEA-COMP:10640"/>
        <dbReference type="ChEBI" id="CHEBI:15377"/>
        <dbReference type="ChEBI" id="CHEBI:15740"/>
        <dbReference type="ChEBI" id="CHEBI:49298"/>
        <dbReference type="ChEBI" id="CHEBI:64731"/>
        <dbReference type="EC" id="3.5.1.88"/>
    </reaction>
</comment>
<comment type="cofactor">
    <cofactor evidence="1">
        <name>Fe(2+)</name>
        <dbReference type="ChEBI" id="CHEBI:29033"/>
    </cofactor>
    <text evidence="1">Binds 1 Fe(2+) ion.</text>
</comment>
<comment type="similarity">
    <text evidence="1">Belongs to the polypeptide deformylase family.</text>
</comment>
<feature type="chain" id="PRO_1000097307" description="Peptide deformylase">
    <location>
        <begin position="1"/>
        <end position="169"/>
    </location>
</feature>
<feature type="active site" evidence="1">
    <location>
        <position position="134"/>
    </location>
</feature>
<feature type="binding site" evidence="1">
    <location>
        <position position="91"/>
    </location>
    <ligand>
        <name>Fe cation</name>
        <dbReference type="ChEBI" id="CHEBI:24875"/>
    </ligand>
</feature>
<feature type="binding site" evidence="1">
    <location>
        <position position="133"/>
    </location>
    <ligand>
        <name>Fe cation</name>
        <dbReference type="ChEBI" id="CHEBI:24875"/>
    </ligand>
</feature>
<feature type="binding site" evidence="1">
    <location>
        <position position="137"/>
    </location>
    <ligand>
        <name>Fe cation</name>
        <dbReference type="ChEBI" id="CHEBI:24875"/>
    </ligand>
</feature>
<protein>
    <recommendedName>
        <fullName evidence="1">Peptide deformylase</fullName>
        <shortName evidence="1">PDF</shortName>
        <ecNumber evidence="1">3.5.1.88</ecNumber>
    </recommendedName>
    <alternativeName>
        <fullName evidence="1">Polypeptide deformylase</fullName>
    </alternativeName>
</protein>
<evidence type="ECO:0000255" key="1">
    <source>
        <dbReference type="HAMAP-Rule" id="MF_00163"/>
    </source>
</evidence>
<accession>B1X6D9</accession>
<organism>
    <name type="scientific">Escherichia coli (strain K12 / DH10B)</name>
    <dbReference type="NCBI Taxonomy" id="316385"/>
    <lineage>
        <taxon>Bacteria</taxon>
        <taxon>Pseudomonadati</taxon>
        <taxon>Pseudomonadota</taxon>
        <taxon>Gammaproteobacteria</taxon>
        <taxon>Enterobacterales</taxon>
        <taxon>Enterobacteriaceae</taxon>
        <taxon>Escherichia</taxon>
    </lineage>
</organism>
<gene>
    <name evidence="1" type="primary">def</name>
    <name type="ordered locus">ECDH10B_3461</name>
</gene>
<keyword id="KW-0378">Hydrolase</keyword>
<keyword id="KW-0408">Iron</keyword>
<keyword id="KW-0479">Metal-binding</keyword>
<keyword id="KW-0648">Protein biosynthesis</keyword>
<name>DEF_ECODH</name>
<dbReference type="EC" id="3.5.1.88" evidence="1"/>
<dbReference type="EMBL" id="CP000948">
    <property type="protein sequence ID" value="ACB04349.1"/>
    <property type="molecule type" value="Genomic_DNA"/>
</dbReference>
<dbReference type="RefSeq" id="WP_000114984.1">
    <property type="nucleotide sequence ID" value="NC_010473.1"/>
</dbReference>
<dbReference type="SMR" id="B1X6D9"/>
<dbReference type="GeneID" id="89518132"/>
<dbReference type="KEGG" id="ecd:ECDH10B_3461"/>
<dbReference type="HOGENOM" id="CLU_061901_2_1_6"/>
<dbReference type="GO" id="GO:0046872">
    <property type="term" value="F:metal ion binding"/>
    <property type="evidence" value="ECO:0007669"/>
    <property type="project" value="UniProtKB-KW"/>
</dbReference>
<dbReference type="GO" id="GO:0042586">
    <property type="term" value="F:peptide deformylase activity"/>
    <property type="evidence" value="ECO:0007669"/>
    <property type="project" value="UniProtKB-UniRule"/>
</dbReference>
<dbReference type="GO" id="GO:0043686">
    <property type="term" value="P:co-translational protein modification"/>
    <property type="evidence" value="ECO:0007669"/>
    <property type="project" value="TreeGrafter"/>
</dbReference>
<dbReference type="GO" id="GO:0006412">
    <property type="term" value="P:translation"/>
    <property type="evidence" value="ECO:0007669"/>
    <property type="project" value="UniProtKB-UniRule"/>
</dbReference>
<dbReference type="CDD" id="cd00487">
    <property type="entry name" value="Pep_deformylase"/>
    <property type="match status" value="1"/>
</dbReference>
<dbReference type="FunFam" id="3.90.45.10:FF:000001">
    <property type="entry name" value="Peptide deformylase"/>
    <property type="match status" value="1"/>
</dbReference>
<dbReference type="Gene3D" id="3.90.45.10">
    <property type="entry name" value="Peptide deformylase"/>
    <property type="match status" value="1"/>
</dbReference>
<dbReference type="HAMAP" id="MF_00163">
    <property type="entry name" value="Pep_deformylase"/>
    <property type="match status" value="1"/>
</dbReference>
<dbReference type="InterPro" id="IPR023635">
    <property type="entry name" value="Peptide_deformylase"/>
</dbReference>
<dbReference type="InterPro" id="IPR036821">
    <property type="entry name" value="Peptide_deformylase_sf"/>
</dbReference>
<dbReference type="NCBIfam" id="TIGR00079">
    <property type="entry name" value="pept_deformyl"/>
    <property type="match status" value="1"/>
</dbReference>
<dbReference type="NCBIfam" id="NF001159">
    <property type="entry name" value="PRK00150.1-3"/>
    <property type="match status" value="1"/>
</dbReference>
<dbReference type="PANTHER" id="PTHR10458">
    <property type="entry name" value="PEPTIDE DEFORMYLASE"/>
    <property type="match status" value="1"/>
</dbReference>
<dbReference type="PANTHER" id="PTHR10458:SF21">
    <property type="entry name" value="PEPTIDE DEFORMYLASE"/>
    <property type="match status" value="1"/>
</dbReference>
<dbReference type="Pfam" id="PF01327">
    <property type="entry name" value="Pep_deformylase"/>
    <property type="match status" value="1"/>
</dbReference>
<dbReference type="PIRSF" id="PIRSF004749">
    <property type="entry name" value="Pep_def"/>
    <property type="match status" value="1"/>
</dbReference>
<dbReference type="PRINTS" id="PR01576">
    <property type="entry name" value="PDEFORMYLASE"/>
</dbReference>
<dbReference type="SUPFAM" id="SSF56420">
    <property type="entry name" value="Peptide deformylase"/>
    <property type="match status" value="1"/>
</dbReference>
<sequence length="169" mass="19328">MSVLQVLHIPDERLRKVAKPVEEVNAEIQRIVDDMFETMYAEEGIGLAATQVDIHQRIIVIDVSENRDERLVLINPELLEKSGETGIEEGCLSIPEQRALVPRAEKVKIRALDRDGKPFELEADGLLAICIQHEMDHLVGKLFMDYLSPLKQQRIRQKVEKLDRLKARA</sequence>
<reference key="1">
    <citation type="journal article" date="2008" name="J. Bacteriol.">
        <title>The complete genome sequence of Escherichia coli DH10B: insights into the biology of a laboratory workhorse.</title>
        <authorList>
            <person name="Durfee T."/>
            <person name="Nelson R."/>
            <person name="Baldwin S."/>
            <person name="Plunkett G. III"/>
            <person name="Burland V."/>
            <person name="Mau B."/>
            <person name="Petrosino J.F."/>
            <person name="Qin X."/>
            <person name="Muzny D.M."/>
            <person name="Ayele M."/>
            <person name="Gibbs R.A."/>
            <person name="Csorgo B."/>
            <person name="Posfai G."/>
            <person name="Weinstock G.M."/>
            <person name="Blattner F.R."/>
        </authorList>
    </citation>
    <scope>NUCLEOTIDE SEQUENCE [LARGE SCALE GENOMIC DNA]</scope>
    <source>
        <strain>K12 / DH10B</strain>
    </source>
</reference>
<proteinExistence type="inferred from homology"/>